<sequence>MSEQTRIQLGRVISSKMDKSIVVAIERMVKHPMYGKYIKRTTKLHAHDENNECNLGDTVEVRECRPLSKTKSWTLVRIVEKARV</sequence>
<accession>Q6LVA7</accession>
<dbReference type="EMBL" id="CR378663">
    <property type="protein sequence ID" value="CAG18768.1"/>
    <property type="molecule type" value="Genomic_DNA"/>
</dbReference>
<dbReference type="RefSeq" id="WP_011217135.1">
    <property type="nucleotide sequence ID" value="NC_006370.1"/>
</dbReference>
<dbReference type="SMR" id="Q6LVA7"/>
<dbReference type="STRING" id="298386.PBPRA0329"/>
<dbReference type="KEGG" id="ppr:PBPRA0329"/>
<dbReference type="eggNOG" id="COG0186">
    <property type="taxonomic scope" value="Bacteria"/>
</dbReference>
<dbReference type="HOGENOM" id="CLU_073626_1_1_6"/>
<dbReference type="Proteomes" id="UP000000593">
    <property type="component" value="Chromosome 1"/>
</dbReference>
<dbReference type="GO" id="GO:0022627">
    <property type="term" value="C:cytosolic small ribosomal subunit"/>
    <property type="evidence" value="ECO:0007669"/>
    <property type="project" value="TreeGrafter"/>
</dbReference>
<dbReference type="GO" id="GO:0019843">
    <property type="term" value="F:rRNA binding"/>
    <property type="evidence" value="ECO:0007669"/>
    <property type="project" value="UniProtKB-UniRule"/>
</dbReference>
<dbReference type="GO" id="GO:0003735">
    <property type="term" value="F:structural constituent of ribosome"/>
    <property type="evidence" value="ECO:0007669"/>
    <property type="project" value="InterPro"/>
</dbReference>
<dbReference type="GO" id="GO:0006412">
    <property type="term" value="P:translation"/>
    <property type="evidence" value="ECO:0007669"/>
    <property type="project" value="UniProtKB-UniRule"/>
</dbReference>
<dbReference type="CDD" id="cd00364">
    <property type="entry name" value="Ribosomal_uS17"/>
    <property type="match status" value="1"/>
</dbReference>
<dbReference type="FunFam" id="2.40.50.140:FF:000014">
    <property type="entry name" value="30S ribosomal protein S17"/>
    <property type="match status" value="1"/>
</dbReference>
<dbReference type="Gene3D" id="2.40.50.140">
    <property type="entry name" value="Nucleic acid-binding proteins"/>
    <property type="match status" value="1"/>
</dbReference>
<dbReference type="HAMAP" id="MF_01345_B">
    <property type="entry name" value="Ribosomal_uS17_B"/>
    <property type="match status" value="1"/>
</dbReference>
<dbReference type="InterPro" id="IPR012340">
    <property type="entry name" value="NA-bd_OB-fold"/>
</dbReference>
<dbReference type="InterPro" id="IPR000266">
    <property type="entry name" value="Ribosomal_uS17"/>
</dbReference>
<dbReference type="InterPro" id="IPR019984">
    <property type="entry name" value="Ribosomal_uS17_bact/chlr"/>
</dbReference>
<dbReference type="InterPro" id="IPR019979">
    <property type="entry name" value="Ribosomal_uS17_CS"/>
</dbReference>
<dbReference type="NCBIfam" id="NF004123">
    <property type="entry name" value="PRK05610.1"/>
    <property type="match status" value="1"/>
</dbReference>
<dbReference type="NCBIfam" id="TIGR03635">
    <property type="entry name" value="uS17_bact"/>
    <property type="match status" value="1"/>
</dbReference>
<dbReference type="PANTHER" id="PTHR10744">
    <property type="entry name" value="40S RIBOSOMAL PROTEIN S11 FAMILY MEMBER"/>
    <property type="match status" value="1"/>
</dbReference>
<dbReference type="PANTHER" id="PTHR10744:SF1">
    <property type="entry name" value="SMALL RIBOSOMAL SUBUNIT PROTEIN US17M"/>
    <property type="match status" value="1"/>
</dbReference>
<dbReference type="Pfam" id="PF00366">
    <property type="entry name" value="Ribosomal_S17"/>
    <property type="match status" value="1"/>
</dbReference>
<dbReference type="PRINTS" id="PR00973">
    <property type="entry name" value="RIBOSOMALS17"/>
</dbReference>
<dbReference type="SUPFAM" id="SSF50249">
    <property type="entry name" value="Nucleic acid-binding proteins"/>
    <property type="match status" value="1"/>
</dbReference>
<dbReference type="PROSITE" id="PS00056">
    <property type="entry name" value="RIBOSOMAL_S17"/>
    <property type="match status" value="1"/>
</dbReference>
<reference key="1">
    <citation type="journal article" date="2005" name="Science">
        <title>Life at depth: Photobacterium profundum genome sequence and expression analysis.</title>
        <authorList>
            <person name="Vezzi A."/>
            <person name="Campanaro S."/>
            <person name="D'Angelo M."/>
            <person name="Simonato F."/>
            <person name="Vitulo N."/>
            <person name="Lauro F.M."/>
            <person name="Cestaro A."/>
            <person name="Malacrida G."/>
            <person name="Simionati B."/>
            <person name="Cannata N."/>
            <person name="Romualdi C."/>
            <person name="Bartlett D.H."/>
            <person name="Valle G."/>
        </authorList>
    </citation>
    <scope>NUCLEOTIDE SEQUENCE [LARGE SCALE GENOMIC DNA]</scope>
    <source>
        <strain>ATCC BAA-1253 / SS9</strain>
    </source>
</reference>
<protein>
    <recommendedName>
        <fullName evidence="1">Small ribosomal subunit protein uS17</fullName>
    </recommendedName>
    <alternativeName>
        <fullName evidence="2">30S ribosomal protein S17</fullName>
    </alternativeName>
</protein>
<comment type="function">
    <text evidence="1">One of the primary rRNA binding proteins, it binds specifically to the 5'-end of 16S ribosomal RNA.</text>
</comment>
<comment type="subunit">
    <text evidence="1">Part of the 30S ribosomal subunit.</text>
</comment>
<comment type="similarity">
    <text evidence="1">Belongs to the universal ribosomal protein uS17 family.</text>
</comment>
<name>RS17_PHOPR</name>
<feature type="chain" id="PRO_0000233532" description="Small ribosomal subunit protein uS17">
    <location>
        <begin position="1"/>
        <end position="84"/>
    </location>
</feature>
<keyword id="KW-1185">Reference proteome</keyword>
<keyword id="KW-0687">Ribonucleoprotein</keyword>
<keyword id="KW-0689">Ribosomal protein</keyword>
<keyword id="KW-0694">RNA-binding</keyword>
<keyword id="KW-0699">rRNA-binding</keyword>
<gene>
    <name evidence="1" type="primary">rpsQ</name>
    <name type="ordered locus">PBPRA0329</name>
</gene>
<evidence type="ECO:0000255" key="1">
    <source>
        <dbReference type="HAMAP-Rule" id="MF_01345"/>
    </source>
</evidence>
<evidence type="ECO:0000305" key="2"/>
<organism>
    <name type="scientific">Photobacterium profundum (strain SS9)</name>
    <dbReference type="NCBI Taxonomy" id="298386"/>
    <lineage>
        <taxon>Bacteria</taxon>
        <taxon>Pseudomonadati</taxon>
        <taxon>Pseudomonadota</taxon>
        <taxon>Gammaproteobacteria</taxon>
        <taxon>Vibrionales</taxon>
        <taxon>Vibrionaceae</taxon>
        <taxon>Photobacterium</taxon>
    </lineage>
</organism>
<proteinExistence type="inferred from homology"/>